<sequence length="134" mass="14528">YGPNLPGCPPGPYPRICARYCHSDRECKAGYYCCNTGCLNICVPKPKPGLCPAIRPGPCKGNVCSNDQDCPGNQKCCGKPGCRRCYRPEKPGSCPPRKYDAGVCVIYCVGDFDCPGNEKCCGSCPRRCEKPCFD</sequence>
<evidence type="ECO:0000250" key="1">
    <source>
        <dbReference type="UniProtKB" id="Q9N0L8"/>
    </source>
</evidence>
<evidence type="ECO:0000255" key="2">
    <source>
        <dbReference type="PROSITE-ProRule" id="PRU00722"/>
    </source>
</evidence>
<evidence type="ECO:0000269" key="3">
    <source>
    </source>
</evidence>
<evidence type="ECO:0000305" key="4"/>
<dbReference type="SMR" id="P84811"/>
<dbReference type="GO" id="GO:0005615">
    <property type="term" value="C:extracellular space"/>
    <property type="evidence" value="ECO:0007669"/>
    <property type="project" value="TreeGrafter"/>
</dbReference>
<dbReference type="GO" id="GO:0004867">
    <property type="term" value="F:serine-type endopeptidase inhibitor activity"/>
    <property type="evidence" value="ECO:0007669"/>
    <property type="project" value="TreeGrafter"/>
</dbReference>
<dbReference type="Gene3D" id="4.10.75.10">
    <property type="entry name" value="Elafin-like"/>
    <property type="match status" value="3"/>
</dbReference>
<dbReference type="InterPro" id="IPR036645">
    <property type="entry name" value="Elafin-like_sf"/>
</dbReference>
<dbReference type="InterPro" id="IPR008197">
    <property type="entry name" value="WAP_dom"/>
</dbReference>
<dbReference type="InterPro" id="IPR050514">
    <property type="entry name" value="WAP_four-disulfide_core"/>
</dbReference>
<dbReference type="PANTHER" id="PTHR19441:SF95">
    <property type="entry name" value="PERLWAPIN ISOFORM X1"/>
    <property type="match status" value="1"/>
</dbReference>
<dbReference type="PANTHER" id="PTHR19441">
    <property type="entry name" value="WHEY ACDIC PROTEIN WAP"/>
    <property type="match status" value="1"/>
</dbReference>
<dbReference type="Pfam" id="PF00095">
    <property type="entry name" value="WAP"/>
    <property type="match status" value="3"/>
</dbReference>
<dbReference type="PRINTS" id="PR00003">
    <property type="entry name" value="4DISULPHCORE"/>
</dbReference>
<dbReference type="SMART" id="SM00217">
    <property type="entry name" value="WAP"/>
    <property type="match status" value="2"/>
</dbReference>
<dbReference type="SUPFAM" id="SSF57256">
    <property type="entry name" value="Elafin-like"/>
    <property type="match status" value="2"/>
</dbReference>
<dbReference type="PROSITE" id="PS51390">
    <property type="entry name" value="WAP"/>
    <property type="match status" value="3"/>
</dbReference>
<accession>P84811</accession>
<comment type="function">
    <text evidence="3">Inhibits growth of calcium carbonate crystals. May inhibit growth of certain crystallographic planes in the mineral phase of nacre in the shell.</text>
</comment>
<comment type="tissue specificity">
    <text evidence="3">Nacreous layer of shell.</text>
</comment>
<organism>
    <name type="scientific">Haliotis laevigata</name>
    <name type="common">Smooth Australian abalone</name>
    <dbReference type="NCBI Taxonomy" id="36097"/>
    <lineage>
        <taxon>Eukaryota</taxon>
        <taxon>Metazoa</taxon>
        <taxon>Spiralia</taxon>
        <taxon>Lophotrochozoa</taxon>
        <taxon>Mollusca</taxon>
        <taxon>Gastropoda</taxon>
        <taxon>Vetigastropoda</taxon>
        <taxon>Lepetellida</taxon>
        <taxon>Haliotoidea</taxon>
        <taxon>Haliotidae</taxon>
        <taxon>Haliotis</taxon>
    </lineage>
</organism>
<keyword id="KW-0903">Direct protein sequencing</keyword>
<keyword id="KW-1015">Disulfide bond</keyword>
<keyword id="KW-0677">Repeat</keyword>
<protein>
    <recommendedName>
        <fullName>Perlwapin</fullName>
    </recommendedName>
</protein>
<reference evidence="4" key="1">
    <citation type="journal article" date="2006" name="Biophys. J.">
        <title>Perlwapin, an abalone nacre protein with three four-disulfide core (whey acidic protein) domains, inhibits the growth of calcium carbonate crystals.</title>
        <authorList>
            <person name="Treccani L."/>
            <person name="Mann K."/>
            <person name="Heinemann F."/>
            <person name="Fritz M."/>
        </authorList>
    </citation>
    <scope>PROTEIN SEQUENCE</scope>
    <scope>FUNCTION</scope>
    <scope>TISSUE SPECIFICITY</scope>
    <scope>VARIANTS ASP-11; GLY-12; ARG-12; GLY-12 INS; ALA-15; ALA-22; ASP-26; ILE-86; VAL-101; ALA-103; ALA-106; LEU-127 AND ASN-134</scope>
    <source>
        <tissue evidence="3">Shell</tissue>
    </source>
</reference>
<feature type="chain" id="PRO_0000248608" description="Perlwapin">
    <location>
        <begin position="1"/>
        <end position="134"/>
    </location>
</feature>
<feature type="domain" description="WAP 1" evidence="2">
    <location>
        <begin position="2"/>
        <end position="45"/>
    </location>
</feature>
<feature type="domain" description="WAP 2" evidence="2">
    <location>
        <begin position="46"/>
        <end position="89"/>
    </location>
</feature>
<feature type="domain" description="WAP 3" evidence="2">
    <location>
        <begin position="90"/>
        <end position="132"/>
    </location>
</feature>
<feature type="disulfide bond" evidence="1 2">
    <location>
        <begin position="8"/>
        <end position="34"/>
    </location>
</feature>
<feature type="disulfide bond" evidence="1 2">
    <location>
        <begin position="17"/>
        <end position="38"/>
    </location>
</feature>
<feature type="disulfide bond" evidence="1 2">
    <location>
        <begin position="21"/>
        <end position="33"/>
    </location>
</feature>
<feature type="disulfide bond" evidence="1 2">
    <location>
        <begin position="27"/>
        <end position="42"/>
    </location>
</feature>
<feature type="disulfide bond" evidence="1 2">
    <location>
        <begin position="51"/>
        <end position="77"/>
    </location>
</feature>
<feature type="disulfide bond" evidence="1 2">
    <location>
        <begin position="59"/>
        <end position="82"/>
    </location>
</feature>
<feature type="disulfide bond" evidence="1 2">
    <location>
        <begin position="64"/>
        <end position="76"/>
    </location>
</feature>
<feature type="disulfide bond" evidence="1 2">
    <location>
        <begin position="70"/>
        <end position="85"/>
    </location>
</feature>
<feature type="disulfide bond" evidence="1 2">
    <location>
        <begin position="94"/>
        <end position="121"/>
    </location>
</feature>
<feature type="disulfide bond" evidence="1 2">
    <location>
        <begin position="104"/>
        <end position="124"/>
    </location>
</feature>
<feature type="disulfide bond" evidence="1 2">
    <location>
        <begin position="108"/>
        <end position="120"/>
    </location>
</feature>
<feature type="disulfide bond" evidence="1 2">
    <location>
        <begin position="114"/>
        <end position="128"/>
    </location>
</feature>
<feature type="sequence variant" evidence="3">
    <original>G</original>
    <variation>D</variation>
    <location>
        <position position="11"/>
    </location>
</feature>
<feature type="sequence variant" evidence="3">
    <original>P</original>
    <variation>G</variation>
    <location>
        <position position="12"/>
    </location>
</feature>
<feature type="sequence variant" evidence="3">
    <original>P</original>
    <variation>PG</variation>
    <location>
        <position position="12"/>
    </location>
</feature>
<feature type="sequence variant" evidence="3">
    <original>P</original>
    <variation>R</variation>
    <location>
        <position position="12"/>
    </location>
</feature>
<feature type="sequence variant" evidence="3">
    <original>R</original>
    <variation>A</variation>
    <location>
        <position position="15"/>
    </location>
</feature>
<feature type="sequence variant" evidence="3">
    <original>H</original>
    <variation>A</variation>
    <location>
        <position position="22"/>
    </location>
</feature>
<feature type="sequence variant" evidence="3">
    <original>E</original>
    <variation>D</variation>
    <location>
        <position position="26"/>
    </location>
</feature>
<feature type="sequence variant" evidence="3">
    <original>Y</original>
    <variation>I</variation>
    <location>
        <position position="86"/>
    </location>
</feature>
<feature type="sequence variant" evidence="3">
    <original>A</original>
    <variation>V</variation>
    <location>
        <position position="101"/>
    </location>
</feature>
<feature type="sequence variant" evidence="3">
    <original>V</original>
    <variation>A</variation>
    <location>
        <position position="103"/>
    </location>
</feature>
<feature type="sequence variant" evidence="3">
    <original>I</original>
    <variation>A</variation>
    <location>
        <position position="106"/>
    </location>
</feature>
<feature type="sequence variant" evidence="3">
    <original>R</original>
    <variation>L</variation>
    <location>
        <position position="127"/>
    </location>
</feature>
<feature type="sequence variant" evidence="3">
    <original>D</original>
    <variation>N</variation>
    <location>
        <position position="134"/>
    </location>
</feature>
<proteinExistence type="evidence at protein level"/>
<name>PWAP_HALLA</name>